<proteinExistence type="evidence at transcript level"/>
<reference key="1">
    <citation type="journal article" date="1991" name="Plant Mol. Biol.">
        <title>Characterization of an alpha-amylase multigene cluster in rice.</title>
        <authorList>
            <person name="Sutliff T.D."/>
            <person name="Huang N."/>
            <person name="Litts J.C."/>
            <person name="Rodriguez R.L."/>
        </authorList>
    </citation>
    <scope>NUCLEOTIDE SEQUENCE [GENOMIC DNA]</scope>
    <source>
        <strain>cv. M202</strain>
        <tissue>Etiolated leaf</tissue>
    </source>
</reference>
<reference key="2">
    <citation type="journal article" date="2005" name="Nature">
        <title>The map-based sequence of the rice genome.</title>
        <authorList>
            <consortium name="International rice genome sequencing project (IRGSP)"/>
        </authorList>
    </citation>
    <scope>NUCLEOTIDE SEQUENCE [LARGE SCALE GENOMIC DNA]</scope>
    <source>
        <strain>cv. Nipponbare</strain>
    </source>
</reference>
<reference key="3">
    <citation type="journal article" date="2008" name="Nucleic Acids Res.">
        <title>The rice annotation project database (RAP-DB): 2008 update.</title>
        <authorList>
            <consortium name="The rice annotation project (RAP)"/>
        </authorList>
    </citation>
    <scope>GENOME REANNOTATION</scope>
    <source>
        <strain>cv. Nipponbare</strain>
    </source>
</reference>
<reference key="4">
    <citation type="journal article" date="2013" name="Rice">
        <title>Improvement of the Oryza sativa Nipponbare reference genome using next generation sequence and optical map data.</title>
        <authorList>
            <person name="Kawahara Y."/>
            <person name="de la Bastide M."/>
            <person name="Hamilton J.P."/>
            <person name="Kanamori H."/>
            <person name="McCombie W.R."/>
            <person name="Ouyang S."/>
            <person name="Schwartz D.C."/>
            <person name="Tanaka T."/>
            <person name="Wu J."/>
            <person name="Zhou S."/>
            <person name="Childs K.L."/>
            <person name="Davidson R.M."/>
            <person name="Lin H."/>
            <person name="Quesada-Ocampo L."/>
            <person name="Vaillancourt B."/>
            <person name="Sakai H."/>
            <person name="Lee S.S."/>
            <person name="Kim J."/>
            <person name="Numa H."/>
            <person name="Itoh T."/>
            <person name="Buell C.R."/>
            <person name="Matsumoto T."/>
        </authorList>
    </citation>
    <scope>GENOME REANNOTATION</scope>
    <source>
        <strain>cv. Nipponbare</strain>
    </source>
</reference>
<reference key="5">
    <citation type="journal article" date="2005" name="PLoS Biol.">
        <title>The genomes of Oryza sativa: a history of duplications.</title>
        <authorList>
            <person name="Yu J."/>
            <person name="Wang J."/>
            <person name="Lin W."/>
            <person name="Li S."/>
            <person name="Li H."/>
            <person name="Zhou J."/>
            <person name="Ni P."/>
            <person name="Dong W."/>
            <person name="Hu S."/>
            <person name="Zeng C."/>
            <person name="Zhang J."/>
            <person name="Zhang Y."/>
            <person name="Li R."/>
            <person name="Xu Z."/>
            <person name="Li S."/>
            <person name="Li X."/>
            <person name="Zheng H."/>
            <person name="Cong L."/>
            <person name="Lin L."/>
            <person name="Yin J."/>
            <person name="Geng J."/>
            <person name="Li G."/>
            <person name="Shi J."/>
            <person name="Liu J."/>
            <person name="Lv H."/>
            <person name="Li J."/>
            <person name="Wang J."/>
            <person name="Deng Y."/>
            <person name="Ran L."/>
            <person name="Shi X."/>
            <person name="Wang X."/>
            <person name="Wu Q."/>
            <person name="Li C."/>
            <person name="Ren X."/>
            <person name="Wang J."/>
            <person name="Wang X."/>
            <person name="Li D."/>
            <person name="Liu D."/>
            <person name="Zhang X."/>
            <person name="Ji Z."/>
            <person name="Zhao W."/>
            <person name="Sun Y."/>
            <person name="Zhang Z."/>
            <person name="Bao J."/>
            <person name="Han Y."/>
            <person name="Dong L."/>
            <person name="Ji J."/>
            <person name="Chen P."/>
            <person name="Wu S."/>
            <person name="Liu J."/>
            <person name="Xiao Y."/>
            <person name="Bu D."/>
            <person name="Tan J."/>
            <person name="Yang L."/>
            <person name="Ye C."/>
            <person name="Zhang J."/>
            <person name="Xu J."/>
            <person name="Zhou Y."/>
            <person name="Yu Y."/>
            <person name="Zhang B."/>
            <person name="Zhuang S."/>
            <person name="Wei H."/>
            <person name="Liu B."/>
            <person name="Lei M."/>
            <person name="Yu H."/>
            <person name="Li Y."/>
            <person name="Xu H."/>
            <person name="Wei S."/>
            <person name="He X."/>
            <person name="Fang L."/>
            <person name="Zhang Z."/>
            <person name="Zhang Y."/>
            <person name="Huang X."/>
            <person name="Su Z."/>
            <person name="Tong W."/>
            <person name="Li J."/>
            <person name="Tong Z."/>
            <person name="Li S."/>
            <person name="Ye J."/>
            <person name="Wang L."/>
            <person name="Fang L."/>
            <person name="Lei T."/>
            <person name="Chen C.-S."/>
            <person name="Chen H.-C."/>
            <person name="Xu Z."/>
            <person name="Li H."/>
            <person name="Huang H."/>
            <person name="Zhang F."/>
            <person name="Xu H."/>
            <person name="Li N."/>
            <person name="Zhao C."/>
            <person name="Li S."/>
            <person name="Dong L."/>
            <person name="Huang Y."/>
            <person name="Li L."/>
            <person name="Xi Y."/>
            <person name="Qi Q."/>
            <person name="Li W."/>
            <person name="Zhang B."/>
            <person name="Hu W."/>
            <person name="Zhang Y."/>
            <person name="Tian X."/>
            <person name="Jiao Y."/>
            <person name="Liang X."/>
            <person name="Jin J."/>
            <person name="Gao L."/>
            <person name="Zheng W."/>
            <person name="Hao B."/>
            <person name="Liu S.-M."/>
            <person name="Wang W."/>
            <person name="Yuan L."/>
            <person name="Cao M."/>
            <person name="McDermott J."/>
            <person name="Samudrala R."/>
            <person name="Wang J."/>
            <person name="Wong G.K.-S."/>
            <person name="Yang H."/>
        </authorList>
    </citation>
    <scope>NUCLEOTIDE SEQUENCE [LARGE SCALE GENOMIC DNA]</scope>
    <source>
        <strain>cv. Nipponbare</strain>
    </source>
</reference>
<reference key="6">
    <citation type="journal article" date="2003" name="Science">
        <title>Collection, mapping, and annotation of over 28,000 cDNA clones from japonica rice.</title>
        <authorList>
            <consortium name="The rice full-length cDNA consortium"/>
        </authorList>
    </citation>
    <scope>NUCLEOTIDE SEQUENCE [LARGE SCALE MRNA]</scope>
    <source>
        <strain>cv. Nipponbare</strain>
    </source>
</reference>
<name>AMY3A_ORYSJ</name>
<sequence length="440" mass="48868">MGKQMAALCGFLLVALLWLTPDVAHAQTQILFQGFNWDSWKKQGGWYNMLKDQVGDIASAGVTHVWLPPPTHSVSPQGYMPGRLYDLNASKYGTKAELKSLIAAFHAKGIKCVADIVVNHRCADDKDGRGVYCIFKGGGPRGCLDWGPSMICCDDTQYSDGTGHRDTGADFAAAPDIDHLNPLVQRELSDWLRWLRRDVGFDGWRLDFAKGYSAAVARTYVQNARPSFVVAEIWNSLSYDGDGKPAANQDGQRQELVNWVKQVGGPATAFDFTTKGILQSAVQGELWRMRDKDGKAPGMIGWYPEKAVTFVDNHDTGSTQRMWPFPSDKVILGYAYILTHPGVPCIFYDHVFDWNLKQEINALAATRKRNGINAGSKLRVLAAESDMYVAMVDERVITKIGPRIDVGNIIPSDFHIVAHGNDYCVWEKSGLRVPEPEGRR</sequence>
<feature type="signal peptide" evidence="4">
    <location>
        <begin position="1"/>
        <end position="26"/>
    </location>
</feature>
<feature type="chain" id="PRO_0000001412" description="Alpha-amylase isozyme 3A">
    <location>
        <begin position="27"/>
        <end position="440"/>
    </location>
</feature>
<feature type="active site" description="Nucleophile" evidence="2">
    <location>
        <position position="207"/>
    </location>
</feature>
<feature type="active site" description="Proton donor" evidence="2">
    <location>
        <position position="232"/>
    </location>
</feature>
<feature type="binding site" evidence="2">
    <location>
        <begin position="72"/>
        <end position="74"/>
    </location>
    <ligand>
        <name>substrate</name>
    </ligand>
</feature>
<feature type="binding site" evidence="2">
    <location>
        <begin position="79"/>
        <end position="80"/>
    </location>
    <ligand>
        <name>substrate</name>
    </ligand>
</feature>
<feature type="binding site" evidence="2">
    <location>
        <position position="119"/>
    </location>
    <ligand>
        <name>Ca(2+)</name>
        <dbReference type="ChEBI" id="CHEBI:29108"/>
        <label>1</label>
    </ligand>
</feature>
<feature type="binding site" evidence="2">
    <location>
        <position position="145"/>
    </location>
    <ligand>
        <name>Ca(2+)</name>
        <dbReference type="ChEBI" id="CHEBI:29108"/>
        <label>2</label>
    </ligand>
</feature>
<feature type="binding site" evidence="2">
    <location>
        <position position="155"/>
    </location>
    <ligand>
        <name>Ca(2+)</name>
        <dbReference type="ChEBI" id="CHEBI:29108"/>
        <label>3</label>
    </ligand>
</feature>
<feature type="binding site" evidence="2">
    <location>
        <position position="166"/>
    </location>
    <ligand>
        <name>Ca(2+)</name>
        <dbReference type="ChEBI" id="CHEBI:29108"/>
        <label>1</label>
    </ligand>
</feature>
<feature type="binding site" evidence="2">
    <location>
        <position position="169"/>
    </location>
    <ligand>
        <name>Ca(2+)</name>
        <dbReference type="ChEBI" id="CHEBI:29108"/>
        <label>1</label>
    </ligand>
</feature>
<feature type="binding site" evidence="2">
    <location>
        <position position="170"/>
    </location>
    <ligand>
        <name>Ca(2+)</name>
        <dbReference type="ChEBI" id="CHEBI:29108"/>
        <label>3</label>
    </ligand>
</feature>
<feature type="binding site" evidence="2">
    <location>
        <position position="171"/>
    </location>
    <ligand>
        <name>Ca(2+)</name>
        <dbReference type="ChEBI" id="CHEBI:29108"/>
        <label>3</label>
    </ligand>
</feature>
<feature type="binding site" evidence="2">
    <location>
        <position position="174"/>
    </location>
    <ligand>
        <name>Ca(2+)</name>
        <dbReference type="ChEBI" id="CHEBI:29108"/>
        <label>3</label>
    </ligand>
</feature>
<feature type="binding site" evidence="2">
    <location>
        <position position="176"/>
    </location>
    <ligand>
        <name>Ca(2+)</name>
        <dbReference type="ChEBI" id="CHEBI:29108"/>
        <label>1</label>
    </ligand>
</feature>
<feature type="binding site" evidence="2">
    <location>
        <position position="176"/>
    </location>
    <ligand>
        <name>Ca(2+)</name>
        <dbReference type="ChEBI" id="CHEBI:29108"/>
        <label>3</label>
    </ligand>
</feature>
<feature type="binding site" evidence="2">
    <location>
        <begin position="205"/>
        <end position="210"/>
    </location>
    <ligand>
        <name>substrate</name>
    </ligand>
</feature>
<feature type="binding site" evidence="2">
    <location>
        <position position="211"/>
    </location>
    <ligand>
        <name>Ca(2+)</name>
        <dbReference type="ChEBI" id="CHEBI:29108"/>
        <label>1</label>
    </ligand>
</feature>
<feature type="binding site" evidence="2">
    <location>
        <position position="234"/>
    </location>
    <ligand>
        <name>substrate</name>
    </ligand>
</feature>
<feature type="binding site" evidence="3">
    <location>
        <position position="236"/>
    </location>
    <ligand>
        <name>substrate</name>
    </ligand>
</feature>
<feature type="binding site" evidence="2">
    <location>
        <position position="254"/>
    </location>
    <ligand>
        <name>substrate</name>
    </ligand>
</feature>
<feature type="binding site" evidence="2">
    <location>
        <position position="295"/>
    </location>
    <ligand>
        <name>substrate</name>
    </ligand>
</feature>
<feature type="binding site" evidence="2">
    <location>
        <begin position="301"/>
        <end position="303"/>
    </location>
    <ligand>
        <name>substrate</name>
    </ligand>
</feature>
<feature type="binding site" evidence="2">
    <location>
        <position position="314"/>
    </location>
    <ligand>
        <name>substrate</name>
    </ligand>
</feature>
<feature type="binding site" evidence="2">
    <location>
        <position position="320"/>
    </location>
    <ligand>
        <name>substrate</name>
    </ligand>
</feature>
<feature type="binding site" evidence="2">
    <location>
        <position position="399"/>
    </location>
    <ligand>
        <name>substrate</name>
    </ligand>
</feature>
<feature type="binding site" evidence="2">
    <location>
        <begin position="404"/>
        <end position="406"/>
    </location>
    <ligand>
        <name>substrate</name>
    </ligand>
</feature>
<feature type="binding site" evidence="2">
    <location>
        <begin position="416"/>
        <end position="422"/>
    </location>
    <ligand>
        <name>substrate</name>
    </ligand>
</feature>
<feature type="binding site" evidence="2">
    <location>
        <position position="426"/>
    </location>
    <ligand>
        <name>substrate</name>
    </ligand>
</feature>
<feature type="site" description="Transition state stabilizer" evidence="2">
    <location>
        <position position="315"/>
    </location>
</feature>
<feature type="sequence conflict" description="In Ref. 1; CAA39776." evidence="5" ref="1">
    <original>H</original>
    <variation>Q</variation>
    <location>
        <position position="350"/>
    </location>
</feature>
<feature type="sequence conflict" description="In Ref. 1; CAA39776." evidence="5" ref="1">
    <original>D</original>
    <variation>E</variation>
    <location>
        <position position="405"/>
    </location>
</feature>
<organism>
    <name type="scientific">Oryza sativa subsp. japonica</name>
    <name type="common">Rice</name>
    <dbReference type="NCBI Taxonomy" id="39947"/>
    <lineage>
        <taxon>Eukaryota</taxon>
        <taxon>Viridiplantae</taxon>
        <taxon>Streptophyta</taxon>
        <taxon>Embryophyta</taxon>
        <taxon>Tracheophyta</taxon>
        <taxon>Spermatophyta</taxon>
        <taxon>Magnoliopsida</taxon>
        <taxon>Liliopsida</taxon>
        <taxon>Poales</taxon>
        <taxon>Poaceae</taxon>
        <taxon>BOP clade</taxon>
        <taxon>Oryzoideae</taxon>
        <taxon>Oryzeae</taxon>
        <taxon>Oryzinae</taxon>
        <taxon>Oryza</taxon>
        <taxon>Oryza sativa</taxon>
    </lineage>
</organism>
<keyword id="KW-0106">Calcium</keyword>
<keyword id="KW-0119">Carbohydrate metabolism</keyword>
<keyword id="KW-0326">Glycosidase</keyword>
<keyword id="KW-0378">Hydrolase</keyword>
<keyword id="KW-0479">Metal-binding</keyword>
<keyword id="KW-1185">Reference proteome</keyword>
<keyword id="KW-0732">Signal</keyword>
<gene>
    <name type="primary">AMY1.2</name>
    <name type="synonym">AMY3A</name>
    <name type="ordered locus">Os09g0457400</name>
    <name type="ordered locus">LOC_Os09g28400</name>
    <name type="ORF">B1045B05.8</name>
    <name evidence="6" type="ORF">OsJ_29629</name>
</gene>
<accession>P27932</accession>
<accession>Q0J184</accession>
<accession>Q67U05</accession>
<evidence type="ECO:0000250" key="1"/>
<evidence type="ECO:0000250" key="2">
    <source>
        <dbReference type="UniProtKB" id="P00693"/>
    </source>
</evidence>
<evidence type="ECO:0000250" key="3">
    <source>
        <dbReference type="UniProtKB" id="P04063"/>
    </source>
</evidence>
<evidence type="ECO:0000255" key="4"/>
<evidence type="ECO:0000305" key="5"/>
<evidence type="ECO:0000312" key="6">
    <source>
        <dbReference type="EMBL" id="EEE69851.1"/>
    </source>
</evidence>
<comment type="function">
    <text>Important for breakdown of endosperm starch during germination.</text>
</comment>
<comment type="catalytic activity">
    <reaction evidence="2">
        <text>Endohydrolysis of (1-&gt;4)-alpha-D-glucosidic linkages in polysaccharides containing three or more (1-&gt;4)-alpha-linked D-glucose units.</text>
        <dbReference type="EC" id="3.2.1.1"/>
    </reaction>
</comment>
<comment type="cofactor">
    <cofactor evidence="2">
        <name>Ca(2+)</name>
        <dbReference type="ChEBI" id="CHEBI:29108"/>
    </cofactor>
    <text evidence="2">Binds 3 Ca(2+) ions per subunit.</text>
</comment>
<comment type="subunit">
    <text>Monomer.</text>
</comment>
<comment type="tissue specificity">
    <text>Most abundant in embryo-derived callus tissue.</text>
</comment>
<comment type="developmental stage">
    <text>Expressed at a high level during germination in the aleurones cells under the control of the plant hormone gibberellic acid and in the developing grains at a low level.</text>
</comment>
<comment type="miscellaneous">
    <text evidence="1">Binds starch not only at the active site, but also via accessory binding sites on the protein surface that are important for efficient binding to starch granules and thereby increase enzyme activity.</text>
</comment>
<comment type="similarity">
    <text evidence="5">Belongs to the glycosyl hydrolase 13 family.</text>
</comment>
<dbReference type="EC" id="3.2.1.1" evidence="2"/>
<dbReference type="EMBL" id="X56336">
    <property type="protein sequence ID" value="CAA39776.1"/>
    <property type="molecule type" value="Genomic_DNA"/>
</dbReference>
<dbReference type="EMBL" id="AP005891">
    <property type="protein sequence ID" value="BAD38366.1"/>
    <property type="molecule type" value="Genomic_DNA"/>
</dbReference>
<dbReference type="EMBL" id="AP008215">
    <property type="protein sequence ID" value="BAF25281.1"/>
    <property type="molecule type" value="Genomic_DNA"/>
</dbReference>
<dbReference type="EMBL" id="AP014965">
    <property type="protein sequence ID" value="BAT08441.1"/>
    <property type="molecule type" value="Genomic_DNA"/>
</dbReference>
<dbReference type="EMBL" id="CM000146">
    <property type="protein sequence ID" value="EEE69851.1"/>
    <property type="molecule type" value="Genomic_DNA"/>
</dbReference>
<dbReference type="EMBL" id="AK099330">
    <property type="protein sequence ID" value="BAG94071.1"/>
    <property type="molecule type" value="mRNA"/>
</dbReference>
<dbReference type="EMBL" id="AK099392">
    <property type="protein sequence ID" value="BAG94104.1"/>
    <property type="molecule type" value="mRNA"/>
</dbReference>
<dbReference type="PIR" id="S14958">
    <property type="entry name" value="S14958"/>
</dbReference>
<dbReference type="RefSeq" id="XP_015612112.1">
    <property type="nucleotide sequence ID" value="XM_015756626.1"/>
</dbReference>
<dbReference type="SMR" id="P27932"/>
<dbReference type="FunCoup" id="P27932">
    <property type="interactions" value="259"/>
</dbReference>
<dbReference type="STRING" id="39947.P27932"/>
<dbReference type="CAZy" id="GH13">
    <property type="family name" value="Glycoside Hydrolase Family 13"/>
</dbReference>
<dbReference type="PaxDb" id="39947-P27932"/>
<dbReference type="EnsemblPlants" id="Os09t0457400-01">
    <property type="protein sequence ID" value="Os09t0457400-01"/>
    <property type="gene ID" value="Os09g0457400"/>
</dbReference>
<dbReference type="Gramene" id="Os09t0457400-01">
    <property type="protein sequence ID" value="Os09t0457400-01"/>
    <property type="gene ID" value="Os09g0457400"/>
</dbReference>
<dbReference type="KEGG" id="dosa:Os09g0457400"/>
<dbReference type="eggNOG" id="KOG0471">
    <property type="taxonomic scope" value="Eukaryota"/>
</dbReference>
<dbReference type="HOGENOM" id="CLU_030069_1_0_1"/>
<dbReference type="InParanoid" id="P27932"/>
<dbReference type="OMA" id="WESCKNQ"/>
<dbReference type="OrthoDB" id="550577at2759"/>
<dbReference type="Proteomes" id="UP000000763">
    <property type="component" value="Chromosome 9"/>
</dbReference>
<dbReference type="Proteomes" id="UP000007752">
    <property type="component" value="Chromosome 9"/>
</dbReference>
<dbReference type="Proteomes" id="UP000059680">
    <property type="component" value="Chromosome 9"/>
</dbReference>
<dbReference type="GO" id="GO:0004556">
    <property type="term" value="F:alpha-amylase activity"/>
    <property type="evidence" value="ECO:0000250"/>
    <property type="project" value="Gramene"/>
</dbReference>
<dbReference type="GO" id="GO:0005509">
    <property type="term" value="F:calcium ion binding"/>
    <property type="evidence" value="ECO:0007669"/>
    <property type="project" value="InterPro"/>
</dbReference>
<dbReference type="GO" id="GO:0005983">
    <property type="term" value="P:starch catabolic process"/>
    <property type="evidence" value="ECO:0000250"/>
    <property type="project" value="Gramene"/>
</dbReference>
<dbReference type="GO" id="GO:0005987">
    <property type="term" value="P:sucrose catabolic process"/>
    <property type="evidence" value="ECO:0000250"/>
    <property type="project" value="Gramene"/>
</dbReference>
<dbReference type="CDD" id="cd11314">
    <property type="entry name" value="AmyAc_arch_bac_plant_AmyA"/>
    <property type="match status" value="1"/>
</dbReference>
<dbReference type="FunFam" id="2.60.40.1180:FF:000021">
    <property type="entry name" value="Alpha-amylase"/>
    <property type="match status" value="1"/>
</dbReference>
<dbReference type="Gene3D" id="3.20.20.80">
    <property type="entry name" value="Glycosidases"/>
    <property type="match status" value="1"/>
</dbReference>
<dbReference type="Gene3D" id="2.60.40.1180">
    <property type="entry name" value="Golgi alpha-mannosidase II"/>
    <property type="match status" value="1"/>
</dbReference>
<dbReference type="InterPro" id="IPR012850">
    <property type="entry name" value="A-amylase_bs_C"/>
</dbReference>
<dbReference type="InterPro" id="IPR013775">
    <property type="entry name" value="A-amylase_pln"/>
</dbReference>
<dbReference type="InterPro" id="IPR006046">
    <property type="entry name" value="Alpha_amylase"/>
</dbReference>
<dbReference type="InterPro" id="IPR006047">
    <property type="entry name" value="Glyco_hydro_13_cat_dom"/>
</dbReference>
<dbReference type="InterPro" id="IPR013780">
    <property type="entry name" value="Glyco_hydro_b"/>
</dbReference>
<dbReference type="InterPro" id="IPR017853">
    <property type="entry name" value="Glycoside_hydrolase_SF"/>
</dbReference>
<dbReference type="PANTHER" id="PTHR43447">
    <property type="entry name" value="ALPHA-AMYLASE"/>
    <property type="match status" value="1"/>
</dbReference>
<dbReference type="Pfam" id="PF07821">
    <property type="entry name" value="Alpha-amyl_C2"/>
    <property type="match status" value="1"/>
</dbReference>
<dbReference type="Pfam" id="PF00128">
    <property type="entry name" value="Alpha-amylase"/>
    <property type="match status" value="1"/>
</dbReference>
<dbReference type="PIRSF" id="PIRSF001028">
    <property type="entry name" value="Alph-amls_plant"/>
    <property type="match status" value="1"/>
</dbReference>
<dbReference type="PRINTS" id="PR00110">
    <property type="entry name" value="ALPHAAMYLASE"/>
</dbReference>
<dbReference type="SMART" id="SM00642">
    <property type="entry name" value="Aamy"/>
    <property type="match status" value="1"/>
</dbReference>
<dbReference type="SMART" id="SM00810">
    <property type="entry name" value="Alpha-amyl_C2"/>
    <property type="match status" value="1"/>
</dbReference>
<dbReference type="SUPFAM" id="SSF51445">
    <property type="entry name" value="(Trans)glycosidases"/>
    <property type="match status" value="1"/>
</dbReference>
<dbReference type="SUPFAM" id="SSF51011">
    <property type="entry name" value="Glycosyl hydrolase domain"/>
    <property type="match status" value="1"/>
</dbReference>
<protein>
    <recommendedName>
        <fullName>Alpha-amylase isozyme 3A</fullName>
        <ecNumber evidence="2">3.2.1.1</ecNumber>
    </recommendedName>
    <alternativeName>
        <fullName>1,4-alpha-D-glucan glucanohydrolase</fullName>
    </alternativeName>
</protein>